<comment type="catalytic activity">
    <reaction>
        <text>Endohydrolysis of (1-&gt;4)-beta-D-glucosidic linkages in cellulose, lichenin and cereal beta-D-glucans.</text>
        <dbReference type="EC" id="3.2.1.4"/>
    </reaction>
</comment>
<comment type="subcellular location">
    <subcellularLocation>
        <location evidence="6">Secreted</location>
    </subcellularLocation>
</comment>
<comment type="developmental stage">
    <text evidence="5">Expressed in the developing septum and ovule primordia during the early stages of flower development.</text>
</comment>
<comment type="similarity">
    <text evidence="4 6">Belongs to the glycosyl hydrolase 9 (cellulase E) family.</text>
</comment>
<accession>Q9SRX3</accession>
<accession>O64949</accession>
<organism>
    <name type="scientific">Arabidopsis thaliana</name>
    <name type="common">Mouse-ear cress</name>
    <dbReference type="NCBI Taxonomy" id="3702"/>
    <lineage>
        <taxon>Eukaryota</taxon>
        <taxon>Viridiplantae</taxon>
        <taxon>Streptophyta</taxon>
        <taxon>Embryophyta</taxon>
        <taxon>Tracheophyta</taxon>
        <taxon>Spermatophyta</taxon>
        <taxon>Magnoliopsida</taxon>
        <taxon>eudicotyledons</taxon>
        <taxon>Gunneridae</taxon>
        <taxon>Pentapetalae</taxon>
        <taxon>rosids</taxon>
        <taxon>malvids</taxon>
        <taxon>Brassicales</taxon>
        <taxon>Brassicaceae</taxon>
        <taxon>Camelineae</taxon>
        <taxon>Arabidopsis</taxon>
    </lineage>
</organism>
<name>GUN1_ARATH</name>
<keyword id="KW-0119">Carbohydrate metabolism</keyword>
<keyword id="KW-0961">Cell wall biogenesis/degradation</keyword>
<keyword id="KW-0136">Cellulose degradation</keyword>
<keyword id="KW-0326">Glycosidase</keyword>
<keyword id="KW-0378">Hydrolase</keyword>
<keyword id="KW-0624">Polysaccharide degradation</keyword>
<keyword id="KW-1185">Reference proteome</keyword>
<keyword id="KW-0964">Secreted</keyword>
<keyword id="KW-0732">Signal</keyword>
<proteinExistence type="evidence at transcript level"/>
<gene>
    <name type="primary">CEL2</name>
    <name type="ordered locus">At1g02800</name>
    <name type="ORF">F22D16.21</name>
</gene>
<dbReference type="EC" id="3.2.1.4"/>
<dbReference type="EMBL" id="AF034573">
    <property type="protein sequence ID" value="AAC16418.1"/>
    <property type="molecule type" value="mRNA"/>
</dbReference>
<dbReference type="EMBL" id="AC009525">
    <property type="protein sequence ID" value="AAF02887.1"/>
    <property type="molecule type" value="Genomic_DNA"/>
</dbReference>
<dbReference type="EMBL" id="CP002684">
    <property type="protein sequence ID" value="AEE27471.1"/>
    <property type="molecule type" value="Genomic_DNA"/>
</dbReference>
<dbReference type="EMBL" id="AK228979">
    <property type="protein sequence ID" value="BAF00867.1"/>
    <property type="molecule type" value="mRNA"/>
</dbReference>
<dbReference type="PIR" id="A86158">
    <property type="entry name" value="A86158"/>
</dbReference>
<dbReference type="PIR" id="T52135">
    <property type="entry name" value="T52135"/>
</dbReference>
<dbReference type="RefSeq" id="NP_171779.1">
    <property type="nucleotide sequence ID" value="NM_100159.3"/>
</dbReference>
<dbReference type="SMR" id="Q9SRX3"/>
<dbReference type="FunCoup" id="Q9SRX3">
    <property type="interactions" value="170"/>
</dbReference>
<dbReference type="STRING" id="3702.Q9SRX3"/>
<dbReference type="CAZy" id="GH9">
    <property type="family name" value="Glycoside Hydrolase Family 9"/>
</dbReference>
<dbReference type="MetOSite" id="Q9SRX3"/>
<dbReference type="PaxDb" id="3702-AT1G02800.1"/>
<dbReference type="ProteomicsDB" id="247240"/>
<dbReference type="EnsemblPlants" id="AT1G02800.1">
    <property type="protein sequence ID" value="AT1G02800.1"/>
    <property type="gene ID" value="AT1G02800"/>
</dbReference>
<dbReference type="GeneID" id="839385"/>
<dbReference type="Gramene" id="AT1G02800.1">
    <property type="protein sequence ID" value="AT1G02800.1"/>
    <property type="gene ID" value="AT1G02800"/>
</dbReference>
<dbReference type="KEGG" id="ath:AT1G02800"/>
<dbReference type="Araport" id="AT1G02800"/>
<dbReference type="TAIR" id="AT1G02800">
    <property type="gene designation" value="CEL2"/>
</dbReference>
<dbReference type="eggNOG" id="ENOG502QPI6">
    <property type="taxonomic scope" value="Eukaryota"/>
</dbReference>
<dbReference type="HOGENOM" id="CLU_008926_1_2_1"/>
<dbReference type="InParanoid" id="Q9SRX3"/>
<dbReference type="OMA" id="KMGESNM"/>
<dbReference type="PhylomeDB" id="Q9SRX3"/>
<dbReference type="BioCyc" id="ARA:AT1G02800-MONOMER"/>
<dbReference type="CD-CODE" id="4299E36E">
    <property type="entry name" value="Nucleolus"/>
</dbReference>
<dbReference type="PRO" id="PR:Q9SRX3"/>
<dbReference type="Proteomes" id="UP000006548">
    <property type="component" value="Chromosome 1"/>
</dbReference>
<dbReference type="ExpressionAtlas" id="Q9SRX3">
    <property type="expression patterns" value="baseline and differential"/>
</dbReference>
<dbReference type="GO" id="GO:0005576">
    <property type="term" value="C:extracellular region"/>
    <property type="evidence" value="ECO:0007669"/>
    <property type="project" value="UniProtKB-SubCell"/>
</dbReference>
<dbReference type="GO" id="GO:0008810">
    <property type="term" value="F:cellulase activity"/>
    <property type="evidence" value="ECO:0000304"/>
    <property type="project" value="TAIR"/>
</dbReference>
<dbReference type="GO" id="GO:0071555">
    <property type="term" value="P:cell wall organization"/>
    <property type="evidence" value="ECO:0007669"/>
    <property type="project" value="UniProtKB-KW"/>
</dbReference>
<dbReference type="GO" id="GO:0030245">
    <property type="term" value="P:cellulose catabolic process"/>
    <property type="evidence" value="ECO:0007669"/>
    <property type="project" value="UniProtKB-KW"/>
</dbReference>
<dbReference type="GO" id="GO:0007389">
    <property type="term" value="P:pattern specification process"/>
    <property type="evidence" value="ECO:0000304"/>
    <property type="project" value="TAIR"/>
</dbReference>
<dbReference type="GO" id="GO:0009624">
    <property type="term" value="P:response to nematode"/>
    <property type="evidence" value="ECO:0000270"/>
    <property type="project" value="TAIR"/>
</dbReference>
<dbReference type="FunFam" id="1.50.10.10:FF:000020">
    <property type="entry name" value="Endoglucanase"/>
    <property type="match status" value="1"/>
</dbReference>
<dbReference type="Gene3D" id="1.50.10.10">
    <property type="match status" value="1"/>
</dbReference>
<dbReference type="InterPro" id="IPR008928">
    <property type="entry name" value="6-hairpin_glycosidase_sf"/>
</dbReference>
<dbReference type="InterPro" id="IPR012341">
    <property type="entry name" value="6hp_glycosidase-like_sf"/>
</dbReference>
<dbReference type="InterPro" id="IPR001701">
    <property type="entry name" value="Glyco_hydro_9"/>
</dbReference>
<dbReference type="InterPro" id="IPR033126">
    <property type="entry name" value="Glyco_hydro_9_Asp/Glu_AS"/>
</dbReference>
<dbReference type="InterPro" id="IPR018221">
    <property type="entry name" value="Glyco_hydro_9_His_AS"/>
</dbReference>
<dbReference type="PANTHER" id="PTHR22298">
    <property type="entry name" value="ENDO-1,4-BETA-GLUCANASE"/>
    <property type="match status" value="1"/>
</dbReference>
<dbReference type="Pfam" id="PF00759">
    <property type="entry name" value="Glyco_hydro_9"/>
    <property type="match status" value="1"/>
</dbReference>
<dbReference type="SUPFAM" id="SSF48208">
    <property type="entry name" value="Six-hairpin glycosidases"/>
    <property type="match status" value="1"/>
</dbReference>
<dbReference type="PROSITE" id="PS60032">
    <property type="entry name" value="GH9_1"/>
    <property type="match status" value="1"/>
</dbReference>
<dbReference type="PROSITE" id="PS00592">
    <property type="entry name" value="GH9_2"/>
    <property type="match status" value="1"/>
</dbReference>
<dbReference type="PROSITE" id="PS00698">
    <property type="entry name" value="GH9_3"/>
    <property type="match status" value="1"/>
</dbReference>
<feature type="signal peptide" evidence="1">
    <location>
        <begin position="1"/>
        <end position="29"/>
    </location>
</feature>
<feature type="chain" id="PRO_0000249254" description="Endoglucanase 1">
    <location>
        <begin position="30"/>
        <end position="501"/>
    </location>
</feature>
<feature type="active site" description="Nucleophile" evidence="4">
    <location>
        <position position="96"/>
    </location>
</feature>
<feature type="active site" evidence="2">
    <location>
        <position position="422"/>
    </location>
</feature>
<feature type="active site" evidence="3">
    <location>
        <position position="473"/>
    </location>
</feature>
<feature type="active site" evidence="3">
    <location>
        <position position="482"/>
    </location>
</feature>
<feature type="sequence conflict" description="In Ref. 1; AAC16418." evidence="6" ref="1">
    <original>L</original>
    <variation>I</variation>
    <location>
        <position position="330"/>
    </location>
</feature>
<sequence length="501" mass="55419">MALYLSSSRLITFLSFILLLSNGFSSSSSRPSIHHRHHLDNHNYKDALSKSILFFEGQRSGKLPPNQRMTWRSNSGLSDGSALNVDLVGGYYDAGDNMKFGFPMAFTTTMLSWSLIEFGGLMKSELPNAKDAIRWATDFLLKATSHPDTIYVQVGDPNMDHACWERPEDMDTPRSVFKVDKNNPGSDIAGEIAAALAAASIVFRKCDPSYSNHLLQRAITVFTFADKYRGPYSAGLAPEVCPFYCSYSGYQDELLWGAAWLQKATNNPTYLNYIKANGQILGADEFDNMFSWDNKHVGARILLSKEFLIQKVKSLEEYKEHADSFICSVLPGASSSQYTPGGLLFKMGESNMQYVTSTSFLLLTYAKYLTSARTVAYCGGSVVTPARLRSIAKKQVDYLLGGNPLKMSYMVGYGLKYPRRIHHRGSSLPSVAVHPTRIQCHDGFSLFTSQSPNPNDLVGAVVGGPDQNDQFPDERSDYGRSEPATYINAPLVGALAYLARS</sequence>
<evidence type="ECO:0000255" key="1"/>
<evidence type="ECO:0000255" key="2">
    <source>
        <dbReference type="PROSITE-ProRule" id="PRU10059"/>
    </source>
</evidence>
<evidence type="ECO:0000255" key="3">
    <source>
        <dbReference type="PROSITE-ProRule" id="PRU10060"/>
    </source>
</evidence>
<evidence type="ECO:0000255" key="4">
    <source>
        <dbReference type="PROSITE-ProRule" id="PRU10140"/>
    </source>
</evidence>
<evidence type="ECO:0000269" key="5">
    <source>
    </source>
</evidence>
<evidence type="ECO:0000305" key="6"/>
<reference key="1">
    <citation type="journal article" date="1999" name="Plant J.">
        <title>Identification of genes expressed during early Arabidopsis carpel development by mRNA differential display: characterisation of ATCEL2, a novel endo-1,4-beta-D-glucanase gene.</title>
        <authorList>
            <person name="Yung M.-H."/>
            <person name="Schaffer R."/>
            <person name="Putterill J."/>
        </authorList>
    </citation>
    <scope>NUCLEOTIDE SEQUENCE [MRNA]</scope>
    <scope>DEVELOPMENTAL STAGE</scope>
    <source>
        <strain>cv. Landsberg erecta</strain>
    </source>
</reference>
<reference key="2">
    <citation type="journal article" date="2000" name="Nature">
        <title>Sequence and analysis of chromosome 1 of the plant Arabidopsis thaliana.</title>
        <authorList>
            <person name="Theologis A."/>
            <person name="Ecker J.R."/>
            <person name="Palm C.J."/>
            <person name="Federspiel N.A."/>
            <person name="Kaul S."/>
            <person name="White O."/>
            <person name="Alonso J."/>
            <person name="Altafi H."/>
            <person name="Araujo R."/>
            <person name="Bowman C.L."/>
            <person name="Brooks S.Y."/>
            <person name="Buehler E."/>
            <person name="Chan A."/>
            <person name="Chao Q."/>
            <person name="Chen H."/>
            <person name="Cheuk R.F."/>
            <person name="Chin C.W."/>
            <person name="Chung M.K."/>
            <person name="Conn L."/>
            <person name="Conway A.B."/>
            <person name="Conway A.R."/>
            <person name="Creasy T.H."/>
            <person name="Dewar K."/>
            <person name="Dunn P."/>
            <person name="Etgu P."/>
            <person name="Feldblyum T.V."/>
            <person name="Feng J.-D."/>
            <person name="Fong B."/>
            <person name="Fujii C.Y."/>
            <person name="Gill J.E."/>
            <person name="Goldsmith A.D."/>
            <person name="Haas B."/>
            <person name="Hansen N.F."/>
            <person name="Hughes B."/>
            <person name="Huizar L."/>
            <person name="Hunter J.L."/>
            <person name="Jenkins J."/>
            <person name="Johnson-Hopson C."/>
            <person name="Khan S."/>
            <person name="Khaykin E."/>
            <person name="Kim C.J."/>
            <person name="Koo H.L."/>
            <person name="Kremenetskaia I."/>
            <person name="Kurtz D.B."/>
            <person name="Kwan A."/>
            <person name="Lam B."/>
            <person name="Langin-Hooper S."/>
            <person name="Lee A."/>
            <person name="Lee J.M."/>
            <person name="Lenz C.A."/>
            <person name="Li J.H."/>
            <person name="Li Y.-P."/>
            <person name="Lin X."/>
            <person name="Liu S.X."/>
            <person name="Liu Z.A."/>
            <person name="Luros J.S."/>
            <person name="Maiti R."/>
            <person name="Marziali A."/>
            <person name="Militscher J."/>
            <person name="Miranda M."/>
            <person name="Nguyen M."/>
            <person name="Nierman W.C."/>
            <person name="Osborne B.I."/>
            <person name="Pai G."/>
            <person name="Peterson J."/>
            <person name="Pham P.K."/>
            <person name="Rizzo M."/>
            <person name="Rooney T."/>
            <person name="Rowley D."/>
            <person name="Sakano H."/>
            <person name="Salzberg S.L."/>
            <person name="Schwartz J.R."/>
            <person name="Shinn P."/>
            <person name="Southwick A.M."/>
            <person name="Sun H."/>
            <person name="Tallon L.J."/>
            <person name="Tambunga G."/>
            <person name="Toriumi M.J."/>
            <person name="Town C.D."/>
            <person name="Utterback T."/>
            <person name="Van Aken S."/>
            <person name="Vaysberg M."/>
            <person name="Vysotskaia V.S."/>
            <person name="Walker M."/>
            <person name="Wu D."/>
            <person name="Yu G."/>
            <person name="Fraser C.M."/>
            <person name="Venter J.C."/>
            <person name="Davis R.W."/>
        </authorList>
    </citation>
    <scope>NUCLEOTIDE SEQUENCE [LARGE SCALE GENOMIC DNA]</scope>
    <source>
        <strain>cv. Columbia</strain>
    </source>
</reference>
<reference key="3">
    <citation type="journal article" date="2017" name="Plant J.">
        <title>Araport11: a complete reannotation of the Arabidopsis thaliana reference genome.</title>
        <authorList>
            <person name="Cheng C.Y."/>
            <person name="Krishnakumar V."/>
            <person name="Chan A.P."/>
            <person name="Thibaud-Nissen F."/>
            <person name="Schobel S."/>
            <person name="Town C.D."/>
        </authorList>
    </citation>
    <scope>GENOME REANNOTATION</scope>
    <source>
        <strain>cv. Columbia</strain>
    </source>
</reference>
<reference key="4">
    <citation type="submission" date="2006-07" db="EMBL/GenBank/DDBJ databases">
        <title>Large-scale analysis of RIKEN Arabidopsis full-length (RAFL) cDNAs.</title>
        <authorList>
            <person name="Totoki Y."/>
            <person name="Seki M."/>
            <person name="Ishida J."/>
            <person name="Nakajima M."/>
            <person name="Enju A."/>
            <person name="Kamiya A."/>
            <person name="Narusaka M."/>
            <person name="Shin-i T."/>
            <person name="Nakagawa M."/>
            <person name="Sakamoto N."/>
            <person name="Oishi K."/>
            <person name="Kohara Y."/>
            <person name="Kobayashi M."/>
            <person name="Toyoda A."/>
            <person name="Sakaki Y."/>
            <person name="Sakurai T."/>
            <person name="Iida K."/>
            <person name="Akiyama K."/>
            <person name="Satou M."/>
            <person name="Toyoda T."/>
            <person name="Konagaya A."/>
            <person name="Carninci P."/>
            <person name="Kawai J."/>
            <person name="Hayashizaki Y."/>
            <person name="Shinozaki K."/>
        </authorList>
    </citation>
    <scope>NUCLEOTIDE SEQUENCE [LARGE SCALE MRNA]</scope>
    <source>
        <strain>cv. Columbia</strain>
    </source>
</reference>
<reference key="5">
    <citation type="journal article" date="2004" name="J. Mol. Evol.">
        <title>Phylogenetic analysis of the plant endo-beta-1,4-glucanase gene family.</title>
        <authorList>
            <person name="Libertini E."/>
            <person name="Li Y."/>
            <person name="McQueen-Mason S.J."/>
        </authorList>
    </citation>
    <scope>GENE FAMILY</scope>
</reference>
<protein>
    <recommendedName>
        <fullName>Endoglucanase 1</fullName>
        <ecNumber>3.2.1.4</ecNumber>
    </recommendedName>
    <alternativeName>
        <fullName>Cellulase 2</fullName>
        <shortName>AtCEL2</shortName>
    </alternativeName>
    <alternativeName>
        <fullName>Endo-1,4-beta glucanase 1</fullName>
    </alternativeName>
</protein>